<comment type="function">
    <text evidence="8">Likely to act as a downstream effector of Cdc42 during dorsal closure, acting in a kinase independent manner with the other ACK family member Ack to positively regulate expression of the myosin zip by promoting the endocytosis of Egfr in the amnioserosa (AS).</text>
</comment>
<comment type="catalytic activity">
    <reaction evidence="4">
        <text>L-tyrosyl-[protein] + ATP = O-phospho-L-tyrosyl-[protein] + ADP + H(+)</text>
        <dbReference type="Rhea" id="RHEA:10596"/>
        <dbReference type="Rhea" id="RHEA-COMP:10136"/>
        <dbReference type="Rhea" id="RHEA-COMP:20101"/>
        <dbReference type="ChEBI" id="CHEBI:15378"/>
        <dbReference type="ChEBI" id="CHEBI:30616"/>
        <dbReference type="ChEBI" id="CHEBI:46858"/>
        <dbReference type="ChEBI" id="CHEBI:61978"/>
        <dbReference type="ChEBI" id="CHEBI:456216"/>
        <dbReference type="EC" id="2.7.10.2"/>
    </reaction>
</comment>
<comment type="disruption phenotype">
    <text evidence="8 9">RNAi-mediated knockdown results in a low frequency of dorsal defects in the developing embryo (PubMed:18816840). RNAi-mediated knockdown does not rescue the small eye phenotypes induced by hid and rpr overexpression (PubMed:22615583). Simultaneous knockdown of Ack and Ack-like results in many embryos failing to properly secrete the cuticle likely due to the loss of zip expression (PubMed:18816840). Mutants also display defects in the dorsal surface including holes in the cuticle and germband retraction failure (PubMed:18816840).</text>
</comment>
<comment type="similarity">
    <text evidence="2">Belongs to the protein kinase superfamily. Tyr protein kinase family.</text>
</comment>
<comment type="sequence caution" evidence="11">
    <conflict type="erroneous gene model prediction">
        <sequence resource="EMBL-CDS" id="AAF58423"/>
    </conflict>
</comment>
<comment type="sequence caution" evidence="11">
    <conflict type="frameshift">
        <sequence resource="EMBL-CDS" id="BAA04489"/>
    </conflict>
</comment>
<feature type="chain" id="PRO_0000088132" description="Activated Cdc42 kinase-like">
    <location>
        <begin position="1"/>
        <end position="1337"/>
    </location>
</feature>
<feature type="domain" description="Protein kinase" evidence="2">
    <location>
        <begin position="133"/>
        <end position="399"/>
    </location>
</feature>
<feature type="domain" description="SH3" evidence="3">
    <location>
        <begin position="399"/>
        <end position="460"/>
    </location>
</feature>
<feature type="domain" description="CRIB" evidence="1">
    <location>
        <begin position="488"/>
        <end position="502"/>
    </location>
</feature>
<feature type="region of interest" description="Disordered" evidence="5">
    <location>
        <begin position="714"/>
        <end position="739"/>
    </location>
</feature>
<feature type="region of interest" description="Disordered" evidence="5">
    <location>
        <begin position="786"/>
        <end position="822"/>
    </location>
</feature>
<feature type="region of interest" description="Disordered" evidence="5">
    <location>
        <begin position="906"/>
        <end position="969"/>
    </location>
</feature>
<feature type="region of interest" description="Disordered" evidence="5">
    <location>
        <begin position="1024"/>
        <end position="1045"/>
    </location>
</feature>
<feature type="compositionally biased region" description="Polar residues" evidence="5">
    <location>
        <begin position="805"/>
        <end position="815"/>
    </location>
</feature>
<feature type="compositionally biased region" description="Pro residues" evidence="5">
    <location>
        <begin position="947"/>
        <end position="957"/>
    </location>
</feature>
<feature type="active site" description="Proton acceptor" evidence="2 4">
    <location>
        <position position="260"/>
    </location>
</feature>
<feature type="binding site" evidence="2">
    <location>
        <begin position="139"/>
        <end position="147"/>
    </location>
    <ligand>
        <name>ATP</name>
        <dbReference type="ChEBI" id="CHEBI:30616"/>
    </ligand>
</feature>
<feature type="binding site" evidence="2">
    <location>
        <position position="164"/>
    </location>
    <ligand>
        <name>ATP</name>
        <dbReference type="ChEBI" id="CHEBI:30616"/>
    </ligand>
</feature>
<feature type="modified residue" description="Phosphoserine" evidence="7">
    <location>
        <position position="71"/>
    </location>
</feature>
<feature type="modified residue" description="Phosphotyrosine" evidence="7">
    <location>
        <position position="291"/>
    </location>
</feature>
<feature type="modified residue" description="Phosphotyrosine" evidence="7">
    <location>
        <position position="292"/>
    </location>
</feature>
<feature type="modified residue" description="Phosphoserine" evidence="7">
    <location>
        <position position="764"/>
    </location>
</feature>
<feature type="modified residue" description="Phosphoserine" evidence="7">
    <location>
        <position position="778"/>
    </location>
</feature>
<feature type="modified residue" description="Phosphoserine" evidence="6">
    <location>
        <position position="831"/>
    </location>
</feature>
<feature type="modified residue" description="Phosphoserine" evidence="7">
    <location>
        <position position="918"/>
    </location>
</feature>
<feature type="modified residue" description="Phosphoserine" evidence="7">
    <location>
        <position position="924"/>
    </location>
</feature>
<feature type="sequence conflict" description="In Ref. 4; BAA04489." evidence="11" ref="4">
    <original>F</original>
    <variation>FSTPFWKGVLSTGKTGYF</variation>
    <location>
        <position position="450"/>
    </location>
</feature>
<feature type="sequence conflict" description="In Ref. 4; BAA04489." evidence="11" ref="4">
    <original>R</original>
    <variation>A</variation>
    <location>
        <position position="484"/>
    </location>
</feature>
<feature type="sequence conflict" description="In Ref. 4; BAA04489." evidence="11" ref="4">
    <original>A</original>
    <variation>P</variation>
    <location>
        <position position="906"/>
    </location>
</feature>
<feature type="sequence conflict" description="In Ref. 4; BAA04489." evidence="11" ref="4">
    <original>D</original>
    <variation>V</variation>
    <location>
        <position position="913"/>
    </location>
</feature>
<proteinExistence type="evidence at protein level"/>
<protein>
    <recommendedName>
        <fullName evidence="12">Activated Cdc42 kinase-like</fullName>
        <ecNumber>2.7.10.2</ecNumber>
    </recommendedName>
    <alternativeName>
        <fullName evidence="10">Tyrosine-protein kinase PR2</fullName>
    </alternativeName>
</protein>
<accession>Q9I7F7</accession>
<accession>Q24316</accession>
<accession>Q960Z6</accession>
<accession>Q9V6K0</accession>
<gene>
    <name evidence="12" type="primary">Ack-like</name>
    <name evidence="12" type="synonym">PR2</name>
    <name evidence="12" type="ORF">CG43741</name>
</gene>
<organism>
    <name type="scientific">Drosophila melanogaster</name>
    <name type="common">Fruit fly</name>
    <dbReference type="NCBI Taxonomy" id="7227"/>
    <lineage>
        <taxon>Eukaryota</taxon>
        <taxon>Metazoa</taxon>
        <taxon>Ecdysozoa</taxon>
        <taxon>Arthropoda</taxon>
        <taxon>Hexapoda</taxon>
        <taxon>Insecta</taxon>
        <taxon>Pterygota</taxon>
        <taxon>Neoptera</taxon>
        <taxon>Endopterygota</taxon>
        <taxon>Diptera</taxon>
        <taxon>Brachycera</taxon>
        <taxon>Muscomorpha</taxon>
        <taxon>Ephydroidea</taxon>
        <taxon>Drosophilidae</taxon>
        <taxon>Drosophila</taxon>
        <taxon>Sophophora</taxon>
    </lineage>
</organism>
<reference evidence="11" key="1">
    <citation type="journal article" date="2000" name="Science">
        <title>The genome sequence of Drosophila melanogaster.</title>
        <authorList>
            <person name="Adams M.D."/>
            <person name="Celniker S.E."/>
            <person name="Holt R.A."/>
            <person name="Evans C.A."/>
            <person name="Gocayne J.D."/>
            <person name="Amanatides P.G."/>
            <person name="Scherer S.E."/>
            <person name="Li P.W."/>
            <person name="Hoskins R.A."/>
            <person name="Galle R.F."/>
            <person name="George R.A."/>
            <person name="Lewis S.E."/>
            <person name="Richards S."/>
            <person name="Ashburner M."/>
            <person name="Henderson S.N."/>
            <person name="Sutton G.G."/>
            <person name="Wortman J.R."/>
            <person name="Yandell M.D."/>
            <person name="Zhang Q."/>
            <person name="Chen L.X."/>
            <person name="Brandon R.C."/>
            <person name="Rogers Y.-H.C."/>
            <person name="Blazej R.G."/>
            <person name="Champe M."/>
            <person name="Pfeiffer B.D."/>
            <person name="Wan K.H."/>
            <person name="Doyle C."/>
            <person name="Baxter E.G."/>
            <person name="Helt G."/>
            <person name="Nelson C.R."/>
            <person name="Miklos G.L.G."/>
            <person name="Abril J.F."/>
            <person name="Agbayani A."/>
            <person name="An H.-J."/>
            <person name="Andrews-Pfannkoch C."/>
            <person name="Baldwin D."/>
            <person name="Ballew R.M."/>
            <person name="Basu A."/>
            <person name="Baxendale J."/>
            <person name="Bayraktaroglu L."/>
            <person name="Beasley E.M."/>
            <person name="Beeson K.Y."/>
            <person name="Benos P.V."/>
            <person name="Berman B.P."/>
            <person name="Bhandari D."/>
            <person name="Bolshakov S."/>
            <person name="Borkova D."/>
            <person name="Botchan M.R."/>
            <person name="Bouck J."/>
            <person name="Brokstein P."/>
            <person name="Brottier P."/>
            <person name="Burtis K.C."/>
            <person name="Busam D.A."/>
            <person name="Butler H."/>
            <person name="Cadieu E."/>
            <person name="Center A."/>
            <person name="Chandra I."/>
            <person name="Cherry J.M."/>
            <person name="Cawley S."/>
            <person name="Dahlke C."/>
            <person name="Davenport L.B."/>
            <person name="Davies P."/>
            <person name="de Pablos B."/>
            <person name="Delcher A."/>
            <person name="Deng Z."/>
            <person name="Mays A.D."/>
            <person name="Dew I."/>
            <person name="Dietz S.M."/>
            <person name="Dodson K."/>
            <person name="Doup L.E."/>
            <person name="Downes M."/>
            <person name="Dugan-Rocha S."/>
            <person name="Dunkov B.C."/>
            <person name="Dunn P."/>
            <person name="Durbin K.J."/>
            <person name="Evangelista C.C."/>
            <person name="Ferraz C."/>
            <person name="Ferriera S."/>
            <person name="Fleischmann W."/>
            <person name="Fosler C."/>
            <person name="Gabrielian A.E."/>
            <person name="Garg N.S."/>
            <person name="Gelbart W.M."/>
            <person name="Glasser K."/>
            <person name="Glodek A."/>
            <person name="Gong F."/>
            <person name="Gorrell J.H."/>
            <person name="Gu Z."/>
            <person name="Guan P."/>
            <person name="Harris M."/>
            <person name="Harris N.L."/>
            <person name="Harvey D.A."/>
            <person name="Heiman T.J."/>
            <person name="Hernandez J.R."/>
            <person name="Houck J."/>
            <person name="Hostin D."/>
            <person name="Houston K.A."/>
            <person name="Howland T.J."/>
            <person name="Wei M.-H."/>
            <person name="Ibegwam C."/>
            <person name="Jalali M."/>
            <person name="Kalush F."/>
            <person name="Karpen G.H."/>
            <person name="Ke Z."/>
            <person name="Kennison J.A."/>
            <person name="Ketchum K.A."/>
            <person name="Kimmel B.E."/>
            <person name="Kodira C.D."/>
            <person name="Kraft C.L."/>
            <person name="Kravitz S."/>
            <person name="Kulp D."/>
            <person name="Lai Z."/>
            <person name="Lasko P."/>
            <person name="Lei Y."/>
            <person name="Levitsky A.A."/>
            <person name="Li J.H."/>
            <person name="Li Z."/>
            <person name="Liang Y."/>
            <person name="Lin X."/>
            <person name="Liu X."/>
            <person name="Mattei B."/>
            <person name="McIntosh T.C."/>
            <person name="McLeod M.P."/>
            <person name="McPherson D."/>
            <person name="Merkulov G."/>
            <person name="Milshina N.V."/>
            <person name="Mobarry C."/>
            <person name="Morris J."/>
            <person name="Moshrefi A."/>
            <person name="Mount S.M."/>
            <person name="Moy M."/>
            <person name="Murphy B."/>
            <person name="Murphy L."/>
            <person name="Muzny D.M."/>
            <person name="Nelson D.L."/>
            <person name="Nelson D.R."/>
            <person name="Nelson K.A."/>
            <person name="Nixon K."/>
            <person name="Nusskern D.R."/>
            <person name="Pacleb J.M."/>
            <person name="Palazzolo M."/>
            <person name="Pittman G.S."/>
            <person name="Pan S."/>
            <person name="Pollard J."/>
            <person name="Puri V."/>
            <person name="Reese M.G."/>
            <person name="Reinert K."/>
            <person name="Remington K."/>
            <person name="Saunders R.D.C."/>
            <person name="Scheeler F."/>
            <person name="Shen H."/>
            <person name="Shue B.C."/>
            <person name="Siden-Kiamos I."/>
            <person name="Simpson M."/>
            <person name="Skupski M.P."/>
            <person name="Smith T.J."/>
            <person name="Spier E."/>
            <person name="Spradling A.C."/>
            <person name="Stapleton M."/>
            <person name="Strong R."/>
            <person name="Sun E."/>
            <person name="Svirskas R."/>
            <person name="Tector C."/>
            <person name="Turner R."/>
            <person name="Venter E."/>
            <person name="Wang A.H."/>
            <person name="Wang X."/>
            <person name="Wang Z.-Y."/>
            <person name="Wassarman D.A."/>
            <person name="Weinstock G.M."/>
            <person name="Weissenbach J."/>
            <person name="Williams S.M."/>
            <person name="Woodage T."/>
            <person name="Worley K.C."/>
            <person name="Wu D."/>
            <person name="Yang S."/>
            <person name="Yao Q.A."/>
            <person name="Ye J."/>
            <person name="Yeh R.-F."/>
            <person name="Zaveri J.S."/>
            <person name="Zhan M."/>
            <person name="Zhang G."/>
            <person name="Zhao Q."/>
            <person name="Zheng L."/>
            <person name="Zheng X.H."/>
            <person name="Zhong F.N."/>
            <person name="Zhong W."/>
            <person name="Zhou X."/>
            <person name="Zhu S.C."/>
            <person name="Zhu X."/>
            <person name="Smith H.O."/>
            <person name="Gibbs R.A."/>
            <person name="Myers E.W."/>
            <person name="Rubin G.M."/>
            <person name="Venter J.C."/>
        </authorList>
    </citation>
    <scope>NUCLEOTIDE SEQUENCE [LARGE SCALE GENOMIC DNA]</scope>
    <source>
        <strain>Berkeley</strain>
    </source>
</reference>
<reference key="2">
    <citation type="journal article" date="2002" name="Genome Biol.">
        <title>Annotation of the Drosophila melanogaster euchromatic genome: a systematic review.</title>
        <authorList>
            <person name="Misra S."/>
            <person name="Crosby M.A."/>
            <person name="Mungall C.J."/>
            <person name="Matthews B.B."/>
            <person name="Campbell K.S."/>
            <person name="Hradecky P."/>
            <person name="Huang Y."/>
            <person name="Kaminker J.S."/>
            <person name="Millburn G.H."/>
            <person name="Prochnik S.E."/>
            <person name="Smith C.D."/>
            <person name="Tupy J.L."/>
            <person name="Whitfield E.J."/>
            <person name="Bayraktaroglu L."/>
            <person name="Berman B.P."/>
            <person name="Bettencourt B.R."/>
            <person name="Celniker S.E."/>
            <person name="de Grey A.D.N.J."/>
            <person name="Drysdale R.A."/>
            <person name="Harris N.L."/>
            <person name="Richter J."/>
            <person name="Russo S."/>
            <person name="Schroeder A.J."/>
            <person name="Shu S.Q."/>
            <person name="Stapleton M."/>
            <person name="Yamada C."/>
            <person name="Ashburner M."/>
            <person name="Gelbart W.M."/>
            <person name="Rubin G.M."/>
            <person name="Lewis S.E."/>
        </authorList>
    </citation>
    <scope>GENOME REANNOTATION</scope>
    <source>
        <strain>Berkeley</strain>
    </source>
</reference>
<reference key="3">
    <citation type="journal article" date="2002" name="Genome Biol.">
        <title>A Drosophila full-length cDNA resource.</title>
        <authorList>
            <person name="Stapleton M."/>
            <person name="Carlson J.W."/>
            <person name="Brokstein P."/>
            <person name="Yu C."/>
            <person name="Champe M."/>
            <person name="George R.A."/>
            <person name="Guarin H."/>
            <person name="Kronmiller B."/>
            <person name="Pacleb J.M."/>
            <person name="Park S."/>
            <person name="Wan K.H."/>
            <person name="Rubin G.M."/>
            <person name="Celniker S.E."/>
        </authorList>
    </citation>
    <scope>NUCLEOTIDE SEQUENCE [LARGE SCALE MRNA]</scope>
    <source>
        <strain>Berkeley</strain>
        <tissue>Embryo</tissue>
    </source>
</reference>
<reference evidence="11" key="4">
    <citation type="journal article" date="1994" name="Gene">
        <title>Alternative splicing generates two distinct transcripts for the Drosophila melanogaster fibroblast growth factor receptor homolog.</title>
        <authorList>
            <person name="Ito M."/>
            <person name="Matsui T."/>
            <person name="Taniguchi T."/>
            <person name="Chihara K."/>
        </authorList>
    </citation>
    <scope>NUCLEOTIDE SEQUENCE [MRNA] OF 13-917</scope>
    <source>
        <strain>Oregon-R</strain>
        <tissue>Embryo</tissue>
    </source>
</reference>
<reference evidence="11" key="5">
    <citation type="journal article" date="1998" name="Biochem. Biophys. Res. Commun.">
        <title>Sampling the genomic pool of protein tyrosine kinase genes using the polymerase chain reaction with genomic DNA.</title>
        <authorList>
            <person name="Oates A.C."/>
            <person name="Wollberg P."/>
            <person name="Achen M.G."/>
            <person name="Wilks A.F."/>
        </authorList>
    </citation>
    <scope>NUCLEOTIDE SEQUENCE [GENOMIC DNA] OF 266-321</scope>
</reference>
<reference key="6">
    <citation type="journal article" date="2007" name="Mol. Biosyst.">
        <title>An integrated chemical, mass spectrometric and computational strategy for (quantitative) phosphoproteomics: application to Drosophila melanogaster Kc167 cells.</title>
        <authorList>
            <person name="Bodenmiller B."/>
            <person name="Mueller L.N."/>
            <person name="Pedrioli P.G.A."/>
            <person name="Pflieger D."/>
            <person name="Juenger M.A."/>
            <person name="Eng J.K."/>
            <person name="Aebersold R."/>
            <person name="Tao W.A."/>
        </authorList>
    </citation>
    <scope>PHOSPHORYLATION [LARGE SCALE ANALYSIS] AT SER-831</scope>
    <scope>IDENTIFICATION BY MASS SPECTROMETRY</scope>
</reference>
<reference key="7">
    <citation type="journal article" date="2008" name="Dev. Dyn.">
        <title>Leading edge-secreted Dpp cooperates with ACK-dependent signaling from the amnioserosa to regulate myosin levels during dorsal closure.</title>
        <authorList>
            <person name="Zahedi B."/>
            <person name="Shen W."/>
            <person name="Xu X."/>
            <person name="Chen X."/>
            <person name="Mahey M."/>
            <person name="Harden N."/>
        </authorList>
    </citation>
    <scope>FUNCTION</scope>
    <scope>DISRUPTION PHENOTYPE</scope>
</reference>
<reference key="8">
    <citation type="journal article" date="2008" name="J. Proteome Res.">
        <title>Phosphoproteome analysis of Drosophila melanogaster embryos.</title>
        <authorList>
            <person name="Zhai B."/>
            <person name="Villen J."/>
            <person name="Beausoleil S.A."/>
            <person name="Mintseris J."/>
            <person name="Gygi S.P."/>
        </authorList>
    </citation>
    <scope>PHOSPHORYLATION [LARGE SCALE ANALYSIS] AT SER-71; TYR-291; TYR-292; SER-764; SER-778; SER-918 AND SER-924</scope>
    <scope>IDENTIFICATION BY MASS SPECTROMETRY</scope>
    <source>
        <tissue>Embryo</tissue>
    </source>
</reference>
<reference key="9">
    <citation type="journal article" date="2012" name="PLoS Genet.">
        <title>Drosophila activated Cdc42 kinase has an anti-apoptotic function.</title>
        <authorList>
            <person name="Schoenherr J.A."/>
            <person name="Drennan J.M."/>
            <person name="Martinez J.S."/>
            <person name="Chikka M.R."/>
            <person name="Hall M.C."/>
            <person name="Chang H.C."/>
            <person name="Clemens J.C."/>
        </authorList>
    </citation>
    <scope>DISRUPTION PHENOTYPE</scope>
</reference>
<dbReference type="EC" id="2.7.10.2"/>
<dbReference type="EMBL" id="AE013599">
    <property type="protein sequence ID" value="AAF58423.5"/>
    <property type="status" value="ALT_SEQ"/>
    <property type="molecule type" value="Genomic_DNA"/>
</dbReference>
<dbReference type="EMBL" id="AE013599">
    <property type="protein sequence ID" value="AAG22275.3"/>
    <property type="molecule type" value="Genomic_DNA"/>
</dbReference>
<dbReference type="EMBL" id="AY051755">
    <property type="protein sequence ID" value="AAK93179.1"/>
    <property type="molecule type" value="mRNA"/>
</dbReference>
<dbReference type="EMBL" id="D17551">
    <property type="protein sequence ID" value="BAA04489.1"/>
    <property type="status" value="ALT_FRAME"/>
    <property type="molecule type" value="mRNA"/>
</dbReference>
<dbReference type="EMBL" id="AJ002909">
    <property type="protein sequence ID" value="CAA05744.1"/>
    <property type="molecule type" value="Genomic_DNA"/>
</dbReference>
<dbReference type="RefSeq" id="NP_477086.2">
    <property type="nucleotide sequence ID" value="NM_057738.4"/>
</dbReference>
<dbReference type="RefSeq" id="NP_477087.3">
    <property type="nucleotide sequence ID" value="NM_057739.4"/>
</dbReference>
<dbReference type="SMR" id="Q9I7F7"/>
<dbReference type="BioGRID" id="62210">
    <property type="interactions" value="2"/>
</dbReference>
<dbReference type="FunCoup" id="Q9I7F7">
    <property type="interactions" value="3"/>
</dbReference>
<dbReference type="IntAct" id="Q9I7F7">
    <property type="interactions" value="3"/>
</dbReference>
<dbReference type="STRING" id="7227.FBpp0303364"/>
<dbReference type="GlyGen" id="Q9I7F7">
    <property type="glycosylation" value="1 site"/>
</dbReference>
<dbReference type="iPTMnet" id="Q9I7F7"/>
<dbReference type="PaxDb" id="7227-FBpp0303362"/>
<dbReference type="EnsemblMetazoa" id="FBtr0330329">
    <property type="protein sequence ID" value="FBpp0303361"/>
    <property type="gene ID" value="FBgn0263998"/>
</dbReference>
<dbReference type="GeneID" id="36442"/>
<dbReference type="KEGG" id="dme:Dmel_CG43741"/>
<dbReference type="AGR" id="FB:FBgn0263998"/>
<dbReference type="CTD" id="36442"/>
<dbReference type="FlyBase" id="FBgn0263998">
    <property type="gene designation" value="Ack-like"/>
</dbReference>
<dbReference type="VEuPathDB" id="VectorBase:FBgn0263998"/>
<dbReference type="eggNOG" id="KOG0199">
    <property type="taxonomic scope" value="Eukaryota"/>
</dbReference>
<dbReference type="GeneTree" id="ENSGT00940000173732"/>
<dbReference type="InParanoid" id="Q9I7F7"/>
<dbReference type="OrthoDB" id="4062651at2759"/>
<dbReference type="PhylomeDB" id="Q9I7F7"/>
<dbReference type="SignaLink" id="Q9I7F7"/>
<dbReference type="BioGRID-ORCS" id="36442">
    <property type="hits" value="0 hits in 1 CRISPR screen"/>
</dbReference>
<dbReference type="ChiTaRS" id="Ack-like">
    <property type="organism name" value="fly"/>
</dbReference>
<dbReference type="GenomeRNAi" id="36442"/>
<dbReference type="PRO" id="PR:Q9I7F7"/>
<dbReference type="Proteomes" id="UP000000803">
    <property type="component" value="Chromosome 2R"/>
</dbReference>
<dbReference type="Bgee" id="FBgn0263998">
    <property type="expression patterns" value="Expressed in hemocyte (sensu Nematoda and Protostomia) in proboscis and 210 other cell types or tissues"/>
</dbReference>
<dbReference type="ExpressionAtlas" id="Q9I7F7">
    <property type="expression patterns" value="baseline and differential"/>
</dbReference>
<dbReference type="GO" id="GO:0005886">
    <property type="term" value="C:plasma membrane"/>
    <property type="evidence" value="ECO:0000318"/>
    <property type="project" value="GO_Central"/>
</dbReference>
<dbReference type="GO" id="GO:0005524">
    <property type="term" value="F:ATP binding"/>
    <property type="evidence" value="ECO:0007669"/>
    <property type="project" value="UniProtKB-KW"/>
</dbReference>
<dbReference type="GO" id="GO:0004715">
    <property type="term" value="F:non-membrane spanning protein tyrosine kinase activity"/>
    <property type="evidence" value="ECO:0000250"/>
    <property type="project" value="FlyBase"/>
</dbReference>
<dbReference type="GO" id="GO:0004713">
    <property type="term" value="F:protein tyrosine kinase activity"/>
    <property type="evidence" value="ECO:0000318"/>
    <property type="project" value="GO_Central"/>
</dbReference>
<dbReference type="GO" id="GO:0046664">
    <property type="term" value="P:dorsal closure, amnioserosa morphology change"/>
    <property type="evidence" value="ECO:0000316"/>
    <property type="project" value="UniProtKB"/>
</dbReference>
<dbReference type="GO" id="GO:0008258">
    <property type="term" value="P:head involution"/>
    <property type="evidence" value="ECO:0000316"/>
    <property type="project" value="UniProtKB"/>
</dbReference>
<dbReference type="GO" id="GO:0031034">
    <property type="term" value="P:myosin filament assembly"/>
    <property type="evidence" value="ECO:0000315"/>
    <property type="project" value="UniProtKB"/>
</dbReference>
<dbReference type="GO" id="GO:0006468">
    <property type="term" value="P:protein phosphorylation"/>
    <property type="evidence" value="ECO:0000303"/>
    <property type="project" value="UniProtKB"/>
</dbReference>
<dbReference type="CDD" id="cd00132">
    <property type="entry name" value="CRIB"/>
    <property type="match status" value="1"/>
</dbReference>
<dbReference type="CDD" id="cd05040">
    <property type="entry name" value="PTKc_Ack_like"/>
    <property type="match status" value="1"/>
</dbReference>
<dbReference type="CDD" id="cd09539">
    <property type="entry name" value="SAM_TNK-like"/>
    <property type="match status" value="1"/>
</dbReference>
<dbReference type="FunFam" id="2.30.30.40:FF:000249">
    <property type="entry name" value="Activated Cdc42 kinase-like"/>
    <property type="match status" value="1"/>
</dbReference>
<dbReference type="FunFam" id="1.10.510.10:FF:000521">
    <property type="entry name" value="Tyrosine-protein kinase pr2"/>
    <property type="match status" value="1"/>
</dbReference>
<dbReference type="Gene3D" id="2.30.30.40">
    <property type="entry name" value="SH3 Domains"/>
    <property type="match status" value="1"/>
</dbReference>
<dbReference type="Gene3D" id="1.10.510.10">
    <property type="entry name" value="Transferase(Phosphotransferase) domain 1"/>
    <property type="match status" value="1"/>
</dbReference>
<dbReference type="InterPro" id="IPR055175">
    <property type="entry name" value="ACK/TNK-like_SAM"/>
</dbReference>
<dbReference type="InterPro" id="IPR000095">
    <property type="entry name" value="CRIB_dom"/>
</dbReference>
<dbReference type="InterPro" id="IPR011009">
    <property type="entry name" value="Kinase-like_dom_sf"/>
</dbReference>
<dbReference type="InterPro" id="IPR050198">
    <property type="entry name" value="Non-receptor_tyrosine_kinases"/>
</dbReference>
<dbReference type="InterPro" id="IPR000719">
    <property type="entry name" value="Prot_kinase_dom"/>
</dbReference>
<dbReference type="InterPro" id="IPR017441">
    <property type="entry name" value="Protein_kinase_ATP_BS"/>
</dbReference>
<dbReference type="InterPro" id="IPR001245">
    <property type="entry name" value="Ser-Thr/Tyr_kinase_cat_dom"/>
</dbReference>
<dbReference type="InterPro" id="IPR036028">
    <property type="entry name" value="SH3-like_dom_sf"/>
</dbReference>
<dbReference type="InterPro" id="IPR001452">
    <property type="entry name" value="SH3_domain"/>
</dbReference>
<dbReference type="InterPro" id="IPR049587">
    <property type="entry name" value="TNK-like_SAM"/>
</dbReference>
<dbReference type="InterPro" id="IPR008266">
    <property type="entry name" value="Tyr_kinase_AS"/>
</dbReference>
<dbReference type="InterPro" id="IPR020635">
    <property type="entry name" value="Tyr_kinase_cat_dom"/>
</dbReference>
<dbReference type="PANTHER" id="PTHR24418">
    <property type="entry name" value="TYROSINE-PROTEIN KINASE"/>
    <property type="match status" value="1"/>
</dbReference>
<dbReference type="Pfam" id="PF00786">
    <property type="entry name" value="PBD"/>
    <property type="match status" value="1"/>
</dbReference>
<dbReference type="Pfam" id="PF07714">
    <property type="entry name" value="PK_Tyr_Ser-Thr"/>
    <property type="match status" value="1"/>
</dbReference>
<dbReference type="Pfam" id="PF22931">
    <property type="entry name" value="SAM_TNK"/>
    <property type="match status" value="1"/>
</dbReference>
<dbReference type="SMART" id="SM00285">
    <property type="entry name" value="PBD"/>
    <property type="match status" value="1"/>
</dbReference>
<dbReference type="SMART" id="SM00326">
    <property type="entry name" value="SH3"/>
    <property type="match status" value="1"/>
</dbReference>
<dbReference type="SMART" id="SM00219">
    <property type="entry name" value="TyrKc"/>
    <property type="match status" value="1"/>
</dbReference>
<dbReference type="SUPFAM" id="SSF56112">
    <property type="entry name" value="Protein kinase-like (PK-like)"/>
    <property type="match status" value="1"/>
</dbReference>
<dbReference type="SUPFAM" id="SSF50044">
    <property type="entry name" value="SH3-domain"/>
    <property type="match status" value="1"/>
</dbReference>
<dbReference type="PROSITE" id="PS50108">
    <property type="entry name" value="CRIB"/>
    <property type="match status" value="1"/>
</dbReference>
<dbReference type="PROSITE" id="PS00107">
    <property type="entry name" value="PROTEIN_KINASE_ATP"/>
    <property type="match status" value="1"/>
</dbReference>
<dbReference type="PROSITE" id="PS50011">
    <property type="entry name" value="PROTEIN_KINASE_DOM"/>
    <property type="match status" value="1"/>
</dbReference>
<dbReference type="PROSITE" id="PS00109">
    <property type="entry name" value="PROTEIN_KINASE_TYR"/>
    <property type="match status" value="1"/>
</dbReference>
<dbReference type="PROSITE" id="PS50002">
    <property type="entry name" value="SH3"/>
    <property type="match status" value="1"/>
</dbReference>
<sequence length="1337" mass="147477">MEYPQIDLYEFLTESELQQYYNAVKNELKITNAAQFKYAADEDLRFIGLSRPEIRRLRKFYEKHFPHSYLSKIKRLLQAPGTMVKREEAPGGGSQVALDGSSASACSSLAAKNGASSPSKVPNNKHIIPADSISVNKQLGTGEFGIVQQGVWSNGNERIQVAIKCLCRERMQSNPMEFLKEAAIMHSIEHENIVRLYGVVLATDSLMLVTELAHLRSLLECLKDSGLRVSFLTIPTLCEFALQICNGMRYLEQKRLIHRDLAARNILVFSKDKVKISDFGLSRALGVGKDYYKTNFNVNLKLPIAWCAPECINYLRFTNASDVWAFGVCLWEMFSYGFQPWAALTGLQILEAIDAPNYQRLEQPDCCPSEYYTLMMKCWQDDAAKRPRFGEIYDQLPDMKPEQLKAVVNCTEPKKDHLLYRQGDIISVLDRNTGTPFWKGVLSTGKTGYFNPSNTVAFLEGLPSSTRDSFSRVSDHRISKRKLRTEMISKPQNDFKHTGHVGIDGATFGDIAFLGSSQNYNHVPKQIVTPYKPSEDIEQTPLLLPPTPTSPDSLQTASGYFPEGANSGGAMGTSMNPTFIPSAEHTPKLIATNGQSSFDFASGSTNPFFPNRGDDELEFGLHNYGADGKSVHSETGWRPTSRSIVDDPHEYHEISDDEIAADKLDFGPSLLDEINSMFGSISAATGSHPKSPGFDHVNNKNEITEMSAKLGQKSGDTNGNKHGHGLLPTLSKKKSSGTVKPISVKDEKILNHAIEIANEISARSMIDLVSDQTPVIHSPKRKFSFRFPHLSNNGSGDKSGGLGTSGSAHTPTHGNASPFPKKKNFTEELQSIPDIQSLIGKEGLEAYNSLIERKALLDIGPSPAATLLRHLDTDEFDLQSLHQSQRPMTLPTRGATQRVRKAELAAGLSRHNDENSNSLEACESPSYMTHGSYKFPEAQPTEQLPEPESPNPIPLPPREGKKQVKTSTKRHVRKYPLIIPANGLQRTLSKLADFGDEAAKSPEISTSSQPQPGRAIEVVAAVRPSGMRRPSRPSEREYENMPTVGKESAHTYQNLDKLTPADAAGLTDTASLQFESIMEADTSKEGILQSPDVTDGFYNFSIQKEHYNKGKDAEFEATQISGLYVNDDELRNLDIESSRRTATPCSSCSALESEHSQPDALPSTESVSEVSRFSSVDNELAGNALFKKVRASVNMAMNRKSVAETSLTSNQPGGASAKPQTEAEYFAATAARLADSNSVSCEDLLEFSDKKPKGCERGVDSDEVRIMVKVLGKDSTPNRCLGALEFINWDVHKSIKLIKLQNLVSEANLSLEASFEALQQHEWDLHTTAHKLNGLKL</sequence>
<evidence type="ECO:0000255" key="1">
    <source>
        <dbReference type="PROSITE-ProRule" id="PRU00057"/>
    </source>
</evidence>
<evidence type="ECO:0000255" key="2">
    <source>
        <dbReference type="PROSITE-ProRule" id="PRU00159"/>
    </source>
</evidence>
<evidence type="ECO:0000255" key="3">
    <source>
        <dbReference type="PROSITE-ProRule" id="PRU00192"/>
    </source>
</evidence>
<evidence type="ECO:0000255" key="4">
    <source>
        <dbReference type="PROSITE-ProRule" id="PRU10028"/>
    </source>
</evidence>
<evidence type="ECO:0000256" key="5">
    <source>
        <dbReference type="SAM" id="MobiDB-lite"/>
    </source>
</evidence>
<evidence type="ECO:0000269" key="6">
    <source>
    </source>
</evidence>
<evidence type="ECO:0000269" key="7">
    <source>
    </source>
</evidence>
<evidence type="ECO:0000269" key="8">
    <source>
    </source>
</evidence>
<evidence type="ECO:0000269" key="9">
    <source>
    </source>
</evidence>
<evidence type="ECO:0000303" key="10">
    <source>
    </source>
</evidence>
<evidence type="ECO:0000305" key="11"/>
<evidence type="ECO:0000312" key="12">
    <source>
        <dbReference type="FlyBase" id="FBgn0263998"/>
    </source>
</evidence>
<name>ACKL_DROME</name>
<keyword id="KW-0067">ATP-binding</keyword>
<keyword id="KW-0418">Kinase</keyword>
<keyword id="KW-0547">Nucleotide-binding</keyword>
<keyword id="KW-0597">Phosphoprotein</keyword>
<keyword id="KW-1185">Reference proteome</keyword>
<keyword id="KW-0728">SH3 domain</keyword>
<keyword id="KW-0808">Transferase</keyword>
<keyword id="KW-0829">Tyrosine-protein kinase</keyword>